<feature type="chain" id="PRO_0000313404" description="DNA ligase">
    <location>
        <begin position="1"/>
        <end position="714"/>
    </location>
</feature>
<feature type="domain" description="BRCT" evidence="1">
    <location>
        <begin position="637"/>
        <end position="714"/>
    </location>
</feature>
<feature type="active site" description="N6-AMP-lysine intermediate" evidence="1">
    <location>
        <position position="130"/>
    </location>
</feature>
<feature type="binding site" evidence="1">
    <location>
        <begin position="47"/>
        <end position="51"/>
    </location>
    <ligand>
        <name>NAD(+)</name>
        <dbReference type="ChEBI" id="CHEBI:57540"/>
    </ligand>
</feature>
<feature type="binding site" evidence="1">
    <location>
        <begin position="96"/>
        <end position="97"/>
    </location>
    <ligand>
        <name>NAD(+)</name>
        <dbReference type="ChEBI" id="CHEBI:57540"/>
    </ligand>
</feature>
<feature type="binding site" evidence="1">
    <location>
        <position position="128"/>
    </location>
    <ligand>
        <name>NAD(+)</name>
        <dbReference type="ChEBI" id="CHEBI:57540"/>
    </ligand>
</feature>
<feature type="binding site" evidence="1">
    <location>
        <position position="151"/>
    </location>
    <ligand>
        <name>NAD(+)</name>
        <dbReference type="ChEBI" id="CHEBI:57540"/>
    </ligand>
</feature>
<feature type="binding site" evidence="1">
    <location>
        <position position="188"/>
    </location>
    <ligand>
        <name>NAD(+)</name>
        <dbReference type="ChEBI" id="CHEBI:57540"/>
    </ligand>
</feature>
<feature type="binding site" evidence="1">
    <location>
        <position position="306"/>
    </location>
    <ligand>
        <name>NAD(+)</name>
        <dbReference type="ChEBI" id="CHEBI:57540"/>
    </ligand>
</feature>
<feature type="binding site" evidence="1">
    <location>
        <position position="330"/>
    </location>
    <ligand>
        <name>NAD(+)</name>
        <dbReference type="ChEBI" id="CHEBI:57540"/>
    </ligand>
</feature>
<feature type="binding site" evidence="1">
    <location>
        <position position="435"/>
    </location>
    <ligand>
        <name>Zn(2+)</name>
        <dbReference type="ChEBI" id="CHEBI:29105"/>
    </ligand>
</feature>
<feature type="binding site" evidence="1">
    <location>
        <position position="438"/>
    </location>
    <ligand>
        <name>Zn(2+)</name>
        <dbReference type="ChEBI" id="CHEBI:29105"/>
    </ligand>
</feature>
<feature type="binding site" evidence="1">
    <location>
        <position position="453"/>
    </location>
    <ligand>
        <name>Zn(2+)</name>
        <dbReference type="ChEBI" id="CHEBI:29105"/>
    </ligand>
</feature>
<feature type="binding site" evidence="1">
    <location>
        <position position="459"/>
    </location>
    <ligand>
        <name>Zn(2+)</name>
        <dbReference type="ChEBI" id="CHEBI:29105"/>
    </ligand>
</feature>
<proteinExistence type="inferred from homology"/>
<accession>Q2IYJ4</accession>
<dbReference type="EC" id="6.5.1.2" evidence="1"/>
<dbReference type="EMBL" id="CP000250">
    <property type="protein sequence ID" value="ABD06716.1"/>
    <property type="molecule type" value="Genomic_DNA"/>
</dbReference>
<dbReference type="RefSeq" id="WP_011440904.1">
    <property type="nucleotide sequence ID" value="NC_007778.1"/>
</dbReference>
<dbReference type="SMR" id="Q2IYJ4"/>
<dbReference type="STRING" id="316058.RPB_2008"/>
<dbReference type="KEGG" id="rpb:RPB_2008"/>
<dbReference type="eggNOG" id="COG0272">
    <property type="taxonomic scope" value="Bacteria"/>
</dbReference>
<dbReference type="HOGENOM" id="CLU_007764_2_1_5"/>
<dbReference type="OrthoDB" id="9759736at2"/>
<dbReference type="Proteomes" id="UP000008809">
    <property type="component" value="Chromosome"/>
</dbReference>
<dbReference type="GO" id="GO:0005829">
    <property type="term" value="C:cytosol"/>
    <property type="evidence" value="ECO:0007669"/>
    <property type="project" value="TreeGrafter"/>
</dbReference>
<dbReference type="GO" id="GO:0003911">
    <property type="term" value="F:DNA ligase (NAD+) activity"/>
    <property type="evidence" value="ECO:0007669"/>
    <property type="project" value="UniProtKB-UniRule"/>
</dbReference>
<dbReference type="GO" id="GO:0046872">
    <property type="term" value="F:metal ion binding"/>
    <property type="evidence" value="ECO:0007669"/>
    <property type="project" value="UniProtKB-KW"/>
</dbReference>
<dbReference type="GO" id="GO:0006281">
    <property type="term" value="P:DNA repair"/>
    <property type="evidence" value="ECO:0007669"/>
    <property type="project" value="UniProtKB-KW"/>
</dbReference>
<dbReference type="GO" id="GO:0006260">
    <property type="term" value="P:DNA replication"/>
    <property type="evidence" value="ECO:0007669"/>
    <property type="project" value="UniProtKB-KW"/>
</dbReference>
<dbReference type="CDD" id="cd17748">
    <property type="entry name" value="BRCT_DNA_ligase_like"/>
    <property type="match status" value="1"/>
</dbReference>
<dbReference type="CDD" id="cd00114">
    <property type="entry name" value="LIGANc"/>
    <property type="match status" value="1"/>
</dbReference>
<dbReference type="FunFam" id="1.10.150.20:FF:000007">
    <property type="entry name" value="DNA ligase"/>
    <property type="match status" value="1"/>
</dbReference>
<dbReference type="FunFam" id="3.30.470.30:FF:000001">
    <property type="entry name" value="DNA ligase"/>
    <property type="match status" value="1"/>
</dbReference>
<dbReference type="Gene3D" id="6.20.10.30">
    <property type="match status" value="1"/>
</dbReference>
<dbReference type="Gene3D" id="1.10.150.20">
    <property type="entry name" value="5' to 3' exonuclease, C-terminal subdomain"/>
    <property type="match status" value="2"/>
</dbReference>
<dbReference type="Gene3D" id="3.40.50.10190">
    <property type="entry name" value="BRCT domain"/>
    <property type="match status" value="1"/>
</dbReference>
<dbReference type="Gene3D" id="3.30.470.30">
    <property type="entry name" value="DNA ligase/mRNA capping enzyme"/>
    <property type="match status" value="1"/>
</dbReference>
<dbReference type="Gene3D" id="1.10.287.610">
    <property type="entry name" value="Helix hairpin bin"/>
    <property type="match status" value="1"/>
</dbReference>
<dbReference type="Gene3D" id="2.40.50.140">
    <property type="entry name" value="Nucleic acid-binding proteins"/>
    <property type="match status" value="1"/>
</dbReference>
<dbReference type="HAMAP" id="MF_01588">
    <property type="entry name" value="DNA_ligase_A"/>
    <property type="match status" value="1"/>
</dbReference>
<dbReference type="InterPro" id="IPR001357">
    <property type="entry name" value="BRCT_dom"/>
</dbReference>
<dbReference type="InterPro" id="IPR036420">
    <property type="entry name" value="BRCT_dom_sf"/>
</dbReference>
<dbReference type="InterPro" id="IPR041663">
    <property type="entry name" value="DisA/LigA_HHH"/>
</dbReference>
<dbReference type="InterPro" id="IPR001679">
    <property type="entry name" value="DNA_ligase"/>
</dbReference>
<dbReference type="InterPro" id="IPR018239">
    <property type="entry name" value="DNA_ligase_AS"/>
</dbReference>
<dbReference type="InterPro" id="IPR033136">
    <property type="entry name" value="DNA_ligase_CS"/>
</dbReference>
<dbReference type="InterPro" id="IPR013839">
    <property type="entry name" value="DNAligase_adenylation"/>
</dbReference>
<dbReference type="InterPro" id="IPR013840">
    <property type="entry name" value="DNAligase_N"/>
</dbReference>
<dbReference type="InterPro" id="IPR012340">
    <property type="entry name" value="NA-bd_OB-fold"/>
</dbReference>
<dbReference type="InterPro" id="IPR004150">
    <property type="entry name" value="NAD_DNA_ligase_OB"/>
</dbReference>
<dbReference type="InterPro" id="IPR010994">
    <property type="entry name" value="RuvA_2-like"/>
</dbReference>
<dbReference type="InterPro" id="IPR004149">
    <property type="entry name" value="Znf_DNAligase_C4"/>
</dbReference>
<dbReference type="NCBIfam" id="TIGR00575">
    <property type="entry name" value="dnlj"/>
    <property type="match status" value="1"/>
</dbReference>
<dbReference type="NCBIfam" id="NF005932">
    <property type="entry name" value="PRK07956.1"/>
    <property type="match status" value="1"/>
</dbReference>
<dbReference type="PANTHER" id="PTHR23389">
    <property type="entry name" value="CHROMOSOME TRANSMISSION FIDELITY FACTOR 18"/>
    <property type="match status" value="1"/>
</dbReference>
<dbReference type="PANTHER" id="PTHR23389:SF9">
    <property type="entry name" value="DNA LIGASE"/>
    <property type="match status" value="1"/>
</dbReference>
<dbReference type="Pfam" id="PF00533">
    <property type="entry name" value="BRCT"/>
    <property type="match status" value="1"/>
</dbReference>
<dbReference type="Pfam" id="PF01653">
    <property type="entry name" value="DNA_ligase_aden"/>
    <property type="match status" value="1"/>
</dbReference>
<dbReference type="Pfam" id="PF03120">
    <property type="entry name" value="DNA_ligase_OB"/>
    <property type="match status" value="1"/>
</dbReference>
<dbReference type="Pfam" id="PF03119">
    <property type="entry name" value="DNA_ligase_ZBD"/>
    <property type="match status" value="1"/>
</dbReference>
<dbReference type="Pfam" id="PF12826">
    <property type="entry name" value="HHH_2"/>
    <property type="match status" value="1"/>
</dbReference>
<dbReference type="Pfam" id="PF22745">
    <property type="entry name" value="Nlig-Ia"/>
    <property type="match status" value="1"/>
</dbReference>
<dbReference type="PIRSF" id="PIRSF001604">
    <property type="entry name" value="LigA"/>
    <property type="match status" value="1"/>
</dbReference>
<dbReference type="SMART" id="SM00292">
    <property type="entry name" value="BRCT"/>
    <property type="match status" value="1"/>
</dbReference>
<dbReference type="SMART" id="SM00532">
    <property type="entry name" value="LIGANc"/>
    <property type="match status" value="1"/>
</dbReference>
<dbReference type="SUPFAM" id="SSF52113">
    <property type="entry name" value="BRCT domain"/>
    <property type="match status" value="1"/>
</dbReference>
<dbReference type="SUPFAM" id="SSF56091">
    <property type="entry name" value="DNA ligase/mRNA capping enzyme, catalytic domain"/>
    <property type="match status" value="1"/>
</dbReference>
<dbReference type="SUPFAM" id="SSF50249">
    <property type="entry name" value="Nucleic acid-binding proteins"/>
    <property type="match status" value="1"/>
</dbReference>
<dbReference type="SUPFAM" id="SSF47781">
    <property type="entry name" value="RuvA domain 2-like"/>
    <property type="match status" value="1"/>
</dbReference>
<dbReference type="PROSITE" id="PS50172">
    <property type="entry name" value="BRCT"/>
    <property type="match status" value="1"/>
</dbReference>
<dbReference type="PROSITE" id="PS01055">
    <property type="entry name" value="DNA_LIGASE_N1"/>
    <property type="match status" value="1"/>
</dbReference>
<dbReference type="PROSITE" id="PS01056">
    <property type="entry name" value="DNA_LIGASE_N2"/>
    <property type="match status" value="1"/>
</dbReference>
<gene>
    <name evidence="1" type="primary">ligA</name>
    <name type="ordered locus">RPB_2008</name>
</gene>
<protein>
    <recommendedName>
        <fullName evidence="1">DNA ligase</fullName>
        <ecNumber evidence="1">6.5.1.2</ecNumber>
    </recommendedName>
    <alternativeName>
        <fullName evidence="1">Polydeoxyribonucleotide synthase [NAD(+)]</fullName>
    </alternativeName>
</protein>
<name>DNLJ_RHOP2</name>
<reference key="1">
    <citation type="submission" date="2006-01" db="EMBL/GenBank/DDBJ databases">
        <title>Complete sequence of Rhodopseudomonas palustris HaA2.</title>
        <authorList>
            <consortium name="US DOE Joint Genome Institute"/>
            <person name="Copeland A."/>
            <person name="Lucas S."/>
            <person name="Lapidus A."/>
            <person name="Barry K."/>
            <person name="Detter J.C."/>
            <person name="Glavina T."/>
            <person name="Hammon N."/>
            <person name="Israni S."/>
            <person name="Pitluck S."/>
            <person name="Chain P."/>
            <person name="Malfatti S."/>
            <person name="Shin M."/>
            <person name="Vergez L."/>
            <person name="Schmutz J."/>
            <person name="Larimer F."/>
            <person name="Land M."/>
            <person name="Hauser L."/>
            <person name="Pelletier D.A."/>
            <person name="Kyrpides N."/>
            <person name="Anderson I."/>
            <person name="Oda Y."/>
            <person name="Harwood C.S."/>
            <person name="Richardson P."/>
        </authorList>
    </citation>
    <scope>NUCLEOTIDE SEQUENCE [LARGE SCALE GENOMIC DNA]</scope>
    <source>
        <strain>HaA2</strain>
    </source>
</reference>
<keyword id="KW-0227">DNA damage</keyword>
<keyword id="KW-0234">DNA repair</keyword>
<keyword id="KW-0235">DNA replication</keyword>
<keyword id="KW-0436">Ligase</keyword>
<keyword id="KW-0460">Magnesium</keyword>
<keyword id="KW-0464">Manganese</keyword>
<keyword id="KW-0479">Metal-binding</keyword>
<keyword id="KW-0520">NAD</keyword>
<keyword id="KW-1185">Reference proteome</keyword>
<keyword id="KW-0862">Zinc</keyword>
<sequence length="714" mass="77728">MTKAPKPAPDIATLTKAKAKVEAMRLRLEIERHNSAYYQHDAPTVSDAEYDALRRRLEAIEAKFPELVSASSPTQTVGAAPARGFAKVQHAVPMLSLGNAFADDEVTEFVERVQRFLRLDAVPSIVAEPKIDGLSLSLRYEHGELMRAATRGDGFTGEDVTANVRTIADIPTTLKAKTIPAACELRGEVYMLKQDFLALNKRQEEAGDTVFANPRNSAAGSLRQKDVAITASRPLKFFAYAWGEMSDYPMDEPTQFKMLGWLKQAGFVVNPEITLCTSVDDALAFYRRIGEQRAALPYDIDGVVYKVDRLDYQERLGFVSRSPRWAIAHKFAAEQATTVLEKIDIQVGRTGALTPVARLQPVTVGGVVVQNATLHNEDYIKGLGNDGSPLRDGVDIREGDTVVVQRAGDVIPQIVSVVLDKRPADATPYHFPHKCPVCGSHAAREEGEAVWRCTGALICPAQAVERLKHFVSRLAFDIDGLGEKQIVLFHERGWVKEPADIFTLQARNAALKLEDIEGYGETSVRNLFAAIDARRTIELHRLIFALGIRHVGEGNAKLLARHYGTLDAFLAAMRAAAEGQTEEGNTSEAYQDLDNIAGIGEVVAAAVVEFFAEPRNVAALDALLAELKDVLPAEQARRDTAVAGKTVVFTGSLTKFTRDEAKAAAERLGAKVAGSVSKKTDYVVAGADAGSKLTKAKDLGVAVLTEDEWLALIS</sequence>
<comment type="function">
    <text evidence="1">DNA ligase that catalyzes the formation of phosphodiester linkages between 5'-phosphoryl and 3'-hydroxyl groups in double-stranded DNA using NAD as a coenzyme and as the energy source for the reaction. It is essential for DNA replication and repair of damaged DNA.</text>
</comment>
<comment type="catalytic activity">
    <reaction evidence="1">
        <text>NAD(+) + (deoxyribonucleotide)n-3'-hydroxyl + 5'-phospho-(deoxyribonucleotide)m = (deoxyribonucleotide)n+m + AMP + beta-nicotinamide D-nucleotide.</text>
        <dbReference type="EC" id="6.5.1.2"/>
    </reaction>
</comment>
<comment type="cofactor">
    <cofactor evidence="1">
        <name>Mg(2+)</name>
        <dbReference type="ChEBI" id="CHEBI:18420"/>
    </cofactor>
    <cofactor evidence="1">
        <name>Mn(2+)</name>
        <dbReference type="ChEBI" id="CHEBI:29035"/>
    </cofactor>
</comment>
<comment type="similarity">
    <text evidence="1">Belongs to the NAD-dependent DNA ligase family. LigA subfamily.</text>
</comment>
<organism>
    <name type="scientific">Rhodopseudomonas palustris (strain HaA2)</name>
    <dbReference type="NCBI Taxonomy" id="316058"/>
    <lineage>
        <taxon>Bacteria</taxon>
        <taxon>Pseudomonadati</taxon>
        <taxon>Pseudomonadota</taxon>
        <taxon>Alphaproteobacteria</taxon>
        <taxon>Hyphomicrobiales</taxon>
        <taxon>Nitrobacteraceae</taxon>
        <taxon>Rhodopseudomonas</taxon>
    </lineage>
</organism>
<evidence type="ECO:0000255" key="1">
    <source>
        <dbReference type="HAMAP-Rule" id="MF_01588"/>
    </source>
</evidence>